<reference key="1">
    <citation type="journal article" date="1994" name="J. Bacteriol.">
        <title>Sequence analysis and molecular characterization of genes required for the biosynthesis of type 1 capsular polysaccharide in Staphylococcus aureus.</title>
        <authorList>
            <person name="Lin W.S."/>
            <person name="Cunneen T."/>
            <person name="Lee C.Y."/>
        </authorList>
    </citation>
    <scope>NUCLEOTIDE SEQUENCE [GENOMIC DNA]</scope>
    <source>
        <strain>ATCC 49951 / M / NCTC 10649</strain>
    </source>
</reference>
<name>CAPG_STAAU</name>
<keyword id="KW-0972">Capsule biogenesis/degradation</keyword>
<keyword id="KW-0270">Exopolysaccharide synthesis</keyword>
<keyword id="KW-0677">Repeat</keyword>
<keyword id="KW-0808">Transferase</keyword>
<sequence>MKKLFLKLMKRNLSEDKIRKLGVQVGNDCRFLSVDRSTFGSEPYLIQIGNHVTITSGVKFATHDGGVWIFRKKYPEIDNFHRIFIGNNVFIGINSIILPGVTIGNNVVVGAGSVVTKDVPDNVIIGGNPAKKIKSIEAYETKILENADYTKKLNYNEKKIYLLNKFKENRYN</sequence>
<protein>
    <recommendedName>
        <fullName>Protein CapG</fullName>
    </recommendedName>
</protein>
<gene>
    <name type="primary">capG</name>
</gene>
<proteinExistence type="inferred from homology"/>
<evidence type="ECO:0000305" key="1"/>
<feature type="chain" id="PRO_0000068728" description="Protein CapG">
    <location>
        <begin position="1"/>
        <end position="172"/>
    </location>
</feature>
<accession>P39856</accession>
<organism>
    <name type="scientific">Staphylococcus aureus</name>
    <dbReference type="NCBI Taxonomy" id="1280"/>
    <lineage>
        <taxon>Bacteria</taxon>
        <taxon>Bacillati</taxon>
        <taxon>Bacillota</taxon>
        <taxon>Bacilli</taxon>
        <taxon>Bacillales</taxon>
        <taxon>Staphylococcaceae</taxon>
        <taxon>Staphylococcus</taxon>
    </lineage>
</organism>
<comment type="function">
    <text>Required for the biosynthesis of type 1 capsular polysaccharide.</text>
</comment>
<comment type="pathway">
    <text>Capsule biogenesis; capsule polysaccharide biosynthesis.</text>
</comment>
<comment type="similarity">
    <text evidence="1">Belongs to the transferase hexapeptide repeat family.</text>
</comment>
<dbReference type="EMBL" id="U10927">
    <property type="protein sequence ID" value="AAA64646.1"/>
    <property type="molecule type" value="Genomic_DNA"/>
</dbReference>
<dbReference type="RefSeq" id="WP_115294908.1">
    <property type="nucleotide sequence ID" value="NZ_UGZL01000001.1"/>
</dbReference>
<dbReference type="SMR" id="P39856"/>
<dbReference type="UniPathway" id="UPA00934"/>
<dbReference type="GO" id="GO:0016740">
    <property type="term" value="F:transferase activity"/>
    <property type="evidence" value="ECO:0007669"/>
    <property type="project" value="UniProtKB-KW"/>
</dbReference>
<dbReference type="GO" id="GO:0045227">
    <property type="term" value="P:capsule polysaccharide biosynthetic process"/>
    <property type="evidence" value="ECO:0007669"/>
    <property type="project" value="UniProtKB-UniPathway"/>
</dbReference>
<dbReference type="CDD" id="cd04647">
    <property type="entry name" value="LbH_MAT_like"/>
    <property type="match status" value="1"/>
</dbReference>
<dbReference type="Gene3D" id="2.160.10.10">
    <property type="entry name" value="Hexapeptide repeat proteins"/>
    <property type="match status" value="1"/>
</dbReference>
<dbReference type="InterPro" id="IPR001451">
    <property type="entry name" value="Hexapep"/>
</dbReference>
<dbReference type="InterPro" id="IPR018357">
    <property type="entry name" value="Hexapep_transf_CS"/>
</dbReference>
<dbReference type="InterPro" id="IPR050179">
    <property type="entry name" value="Trans_hexapeptide_repeat"/>
</dbReference>
<dbReference type="InterPro" id="IPR011004">
    <property type="entry name" value="Trimer_LpxA-like_sf"/>
</dbReference>
<dbReference type="PANTHER" id="PTHR43300">
    <property type="entry name" value="ACETYLTRANSFERASE"/>
    <property type="match status" value="1"/>
</dbReference>
<dbReference type="PANTHER" id="PTHR43300:SF11">
    <property type="entry name" value="ACETYLTRANSFERASE RV3034C-RELATED"/>
    <property type="match status" value="1"/>
</dbReference>
<dbReference type="Pfam" id="PF00132">
    <property type="entry name" value="Hexapep"/>
    <property type="match status" value="1"/>
</dbReference>
<dbReference type="SUPFAM" id="SSF51161">
    <property type="entry name" value="Trimeric LpxA-like enzymes"/>
    <property type="match status" value="1"/>
</dbReference>
<dbReference type="PROSITE" id="PS00101">
    <property type="entry name" value="HEXAPEP_TRANSFERASES"/>
    <property type="match status" value="1"/>
</dbReference>